<proteinExistence type="inferred from homology"/>
<gene>
    <name type="primary">pgaI</name>
    <name type="synonym">pg1</name>
    <name type="synonym">pga1</name>
    <name type="ORF">AFLA_108160</name>
</gene>
<feature type="signal peptide" evidence="2">
    <location>
        <begin position="1"/>
        <end position="17"/>
    </location>
</feature>
<feature type="propeptide" id="PRO_0000393619" evidence="2">
    <location>
        <begin position="18"/>
        <end position="30"/>
    </location>
</feature>
<feature type="chain" id="PRO_0000393620" description="Probable endopolygalacturonase I">
    <location>
        <begin position="31"/>
        <end position="367"/>
    </location>
</feature>
<feature type="repeat" description="PbH1 1">
    <location>
        <begin position="161"/>
        <end position="191"/>
    </location>
</feature>
<feature type="repeat" description="PbH1 2">
    <location>
        <begin position="192"/>
        <end position="213"/>
    </location>
</feature>
<feature type="repeat" description="PbH1 3">
    <location>
        <begin position="214"/>
        <end position="234"/>
    </location>
</feature>
<feature type="repeat" description="PbH1 4">
    <location>
        <begin position="243"/>
        <end position="264"/>
    </location>
</feature>
<feature type="repeat" description="PbH1 5">
    <location>
        <begin position="272"/>
        <end position="294"/>
    </location>
</feature>
<feature type="active site" description="Proton donor" evidence="3">
    <location>
        <position position="206"/>
    </location>
</feature>
<feature type="active site" evidence="3">
    <location>
        <position position="228"/>
    </location>
</feature>
<feature type="glycosylation site" description="N-linked (GlcNAc...) asparagine" evidence="2">
    <location>
        <position position="279"/>
    </location>
</feature>
<feature type="disulfide bond" evidence="1">
    <location>
        <begin position="34"/>
        <end position="49"/>
    </location>
</feature>
<feature type="disulfide bond" evidence="1">
    <location>
        <begin position="208"/>
        <end position="224"/>
    </location>
</feature>
<feature type="disulfide bond" evidence="1">
    <location>
        <begin position="334"/>
        <end position="339"/>
    </location>
</feature>
<feature type="disulfide bond" evidence="1">
    <location>
        <begin position="358"/>
        <end position="367"/>
    </location>
</feature>
<name>PGLR1_ASPFN</name>
<organism>
    <name type="scientific">Aspergillus flavus (strain ATCC 200026 / FGSC A1120 / IAM 13836 / NRRL 3357 / JCM 12722 / SRRC 167)</name>
    <dbReference type="NCBI Taxonomy" id="332952"/>
    <lineage>
        <taxon>Eukaryota</taxon>
        <taxon>Fungi</taxon>
        <taxon>Dikarya</taxon>
        <taxon>Ascomycota</taxon>
        <taxon>Pezizomycotina</taxon>
        <taxon>Eurotiomycetes</taxon>
        <taxon>Eurotiomycetidae</taxon>
        <taxon>Eurotiales</taxon>
        <taxon>Aspergillaceae</taxon>
        <taxon>Aspergillus</taxon>
        <taxon>Aspergillus subgen. Circumdati</taxon>
    </lineage>
</organism>
<sequence>MHFQLLGLAALGSLAAAAPAPSRTSELVERGSSCTFTSAAQASASAKSCSNIVLKNIAVPAGETLDLSKAKDGATITFEGTTTFGYKEWKGPLIRFGGNKITVTQAAGAVIDGQGSRWWDGKGTNGGKTKPKFIYAHKLQSSTIKGLHVKNSPVQVFSVQGNDVHLTDITIDNSDGDNNGGHNTDAFDVSESNGVYITGANVKNQDDCLAINSGENIEFTGATCSGGHGISIGSIGNRDSNTVKNVKVADSTVVDSDNGIRIKTISGATGSVSGVTYENITLKNIKKNGIVIEQDYKNGGPTGKPTTGVPITDLTVNGVTGSVASKATPVYILCGKGSCSDWTWKGVSISGGKKSDKCQNIPSGASC</sequence>
<evidence type="ECO:0000250" key="1"/>
<evidence type="ECO:0000255" key="2"/>
<evidence type="ECO:0000255" key="3">
    <source>
        <dbReference type="PROSITE-ProRule" id="PRU10052"/>
    </source>
</evidence>
<evidence type="ECO:0000305" key="4"/>
<keyword id="KW-0961">Cell wall biogenesis/degradation</keyword>
<keyword id="KW-1015">Disulfide bond</keyword>
<keyword id="KW-0325">Glycoprotein</keyword>
<keyword id="KW-0326">Glycosidase</keyword>
<keyword id="KW-0378">Hydrolase</keyword>
<keyword id="KW-0677">Repeat</keyword>
<keyword id="KW-0964">Secreted</keyword>
<keyword id="KW-0732">Signal</keyword>
<keyword id="KW-0865">Zymogen</keyword>
<comment type="function">
    <text evidence="1">Involved in maceration and soft-rotting of plant tissue. Hydrolyzes the 1,4-alpha glycosidic bonds of de-esterified pectate in the smooth region of the plant cell wall (By similarity).</text>
</comment>
<comment type="catalytic activity">
    <reaction>
        <text>(1,4-alpha-D-galacturonosyl)n+m + H2O = (1,4-alpha-D-galacturonosyl)n + (1,4-alpha-D-galacturonosyl)m.</text>
        <dbReference type="EC" id="3.2.1.15"/>
    </reaction>
</comment>
<comment type="subcellular location">
    <subcellularLocation>
        <location evidence="1">Secreted</location>
    </subcellularLocation>
</comment>
<comment type="similarity">
    <text evidence="4">Belongs to the glycosyl hydrolase 28 family.</text>
</comment>
<dbReference type="EC" id="3.2.1.15"/>
<dbReference type="EMBL" id="EQ963475">
    <property type="protein sequence ID" value="EED53441.1"/>
    <property type="molecule type" value="Genomic_DNA"/>
</dbReference>
<dbReference type="RefSeq" id="XP_002376687.1">
    <property type="nucleotide sequence ID" value="XM_002376646.1"/>
</dbReference>
<dbReference type="SMR" id="B8N8M2"/>
<dbReference type="STRING" id="332952.B8N8M2"/>
<dbReference type="GlyCosmos" id="B8N8M2">
    <property type="glycosylation" value="1 site, No reported glycans"/>
</dbReference>
<dbReference type="EnsemblFungi" id="EED53441">
    <property type="protein sequence ID" value="EED53441"/>
    <property type="gene ID" value="AFLA_108160"/>
</dbReference>
<dbReference type="VEuPathDB" id="FungiDB:AFLA_006751"/>
<dbReference type="eggNOG" id="ENOG502QTAW">
    <property type="taxonomic scope" value="Eukaryota"/>
</dbReference>
<dbReference type="HOGENOM" id="CLU_040116_0_0_1"/>
<dbReference type="OMA" id="EGACADW"/>
<dbReference type="GO" id="GO:0005576">
    <property type="term" value="C:extracellular region"/>
    <property type="evidence" value="ECO:0000250"/>
    <property type="project" value="UniProtKB"/>
</dbReference>
<dbReference type="GO" id="GO:0047911">
    <property type="term" value="F:galacturan 1,4-alpha-galacturonidase activity"/>
    <property type="evidence" value="ECO:0000250"/>
    <property type="project" value="UniProtKB"/>
</dbReference>
<dbReference type="GO" id="GO:0004650">
    <property type="term" value="F:polygalacturonase activity"/>
    <property type="evidence" value="ECO:0000250"/>
    <property type="project" value="UniProtKB"/>
</dbReference>
<dbReference type="GO" id="GO:0071555">
    <property type="term" value="P:cell wall organization"/>
    <property type="evidence" value="ECO:0007669"/>
    <property type="project" value="UniProtKB-KW"/>
</dbReference>
<dbReference type="GO" id="GO:0045490">
    <property type="term" value="P:pectin catabolic process"/>
    <property type="evidence" value="ECO:0000250"/>
    <property type="project" value="UniProtKB"/>
</dbReference>
<dbReference type="FunFam" id="2.160.20.10:FF:000002">
    <property type="entry name" value="Endopolygalacturonase D"/>
    <property type="match status" value="1"/>
</dbReference>
<dbReference type="Gene3D" id="2.160.20.10">
    <property type="entry name" value="Single-stranded right-handed beta-helix, Pectin lyase-like"/>
    <property type="match status" value="1"/>
</dbReference>
<dbReference type="InterPro" id="IPR000743">
    <property type="entry name" value="Glyco_hydro_28"/>
</dbReference>
<dbReference type="InterPro" id="IPR050434">
    <property type="entry name" value="Glycosyl_hydrlase_28"/>
</dbReference>
<dbReference type="InterPro" id="IPR006626">
    <property type="entry name" value="PbH1"/>
</dbReference>
<dbReference type="InterPro" id="IPR012334">
    <property type="entry name" value="Pectin_lyas_fold"/>
</dbReference>
<dbReference type="InterPro" id="IPR011050">
    <property type="entry name" value="Pectin_lyase_fold/virulence"/>
</dbReference>
<dbReference type="PANTHER" id="PTHR31884:SF13">
    <property type="entry name" value="ENDOPOLYGALACTURONASE B"/>
    <property type="match status" value="1"/>
</dbReference>
<dbReference type="PANTHER" id="PTHR31884">
    <property type="entry name" value="POLYGALACTURONASE"/>
    <property type="match status" value="1"/>
</dbReference>
<dbReference type="Pfam" id="PF00295">
    <property type="entry name" value="Glyco_hydro_28"/>
    <property type="match status" value="1"/>
</dbReference>
<dbReference type="SMART" id="SM00710">
    <property type="entry name" value="PbH1"/>
    <property type="match status" value="5"/>
</dbReference>
<dbReference type="SUPFAM" id="SSF51126">
    <property type="entry name" value="Pectin lyase-like"/>
    <property type="match status" value="1"/>
</dbReference>
<dbReference type="PROSITE" id="PS00502">
    <property type="entry name" value="POLYGALACTURONASE"/>
    <property type="match status" value="1"/>
</dbReference>
<accession>B8N8M2</accession>
<protein>
    <recommendedName>
        <fullName>Probable endopolygalacturonase I</fullName>
        <ecNumber>3.2.1.15</ecNumber>
    </recommendedName>
    <alternativeName>
        <fullName>Pectinase 1</fullName>
    </alternativeName>
    <alternativeName>
        <fullName>Polygalacturonase I</fullName>
        <shortName>PG-I</shortName>
    </alternativeName>
</protein>
<reference key="1">
    <citation type="journal article" date="2015" name="Genome Announc.">
        <title>Genome sequence of Aspergillus flavus NRRL 3357, a strain that causes aflatoxin contamination of food and feed.</title>
        <authorList>
            <person name="Nierman W.C."/>
            <person name="Yu J."/>
            <person name="Fedorova-Abrams N.D."/>
            <person name="Losada L."/>
            <person name="Cleveland T.E."/>
            <person name="Bhatnagar D."/>
            <person name="Bennett J.W."/>
            <person name="Dean R."/>
            <person name="Payne G.A."/>
        </authorList>
    </citation>
    <scope>NUCLEOTIDE SEQUENCE [LARGE SCALE GENOMIC DNA]</scope>
    <source>
        <strain>ATCC 200026 / FGSC A1120 / IAM 13836 / NRRL 3357 / JCM 12722 / SRRC 167</strain>
    </source>
</reference>